<comment type="function">
    <text evidence="1">An essential GTPase which binds GTP, GDP and possibly (p)ppGpp with moderate affinity, with high nucleotide exchange rates and a fairly low GTP hydrolysis rate. Plays a role in control of the cell cycle, stress response, ribosome biogenesis and in those bacteria that undergo differentiation, in morphogenesis control.</text>
</comment>
<comment type="cofactor">
    <cofactor evidence="1">
        <name>Mg(2+)</name>
        <dbReference type="ChEBI" id="CHEBI:18420"/>
    </cofactor>
</comment>
<comment type="subunit">
    <text evidence="1">Monomer.</text>
</comment>
<comment type="subcellular location">
    <subcellularLocation>
        <location evidence="1">Cytoplasm</location>
    </subcellularLocation>
</comment>
<comment type="similarity">
    <text evidence="1">Belongs to the TRAFAC class OBG-HflX-like GTPase superfamily. OBG GTPase family.</text>
</comment>
<reference key="1">
    <citation type="journal article" date="2003" name="Proc. Natl. Acad. Sci. U.S.A.">
        <title>The genome sequence of Clostridium tetani, the causative agent of tetanus disease.</title>
        <authorList>
            <person name="Brueggemann H."/>
            <person name="Baeumer S."/>
            <person name="Fricke W.F."/>
            <person name="Wiezer A."/>
            <person name="Liesegang H."/>
            <person name="Decker I."/>
            <person name="Herzberg C."/>
            <person name="Martinez-Arias R."/>
            <person name="Merkl R."/>
            <person name="Henne A."/>
            <person name="Gottschalk G."/>
        </authorList>
    </citation>
    <scope>NUCLEOTIDE SEQUENCE [LARGE SCALE GENOMIC DNA]</scope>
    <source>
        <strain>Massachusetts / E88</strain>
    </source>
</reference>
<accession>Q892N8</accession>
<name>OBG_CLOTE</name>
<organism>
    <name type="scientific">Clostridium tetani (strain Massachusetts / E88)</name>
    <dbReference type="NCBI Taxonomy" id="212717"/>
    <lineage>
        <taxon>Bacteria</taxon>
        <taxon>Bacillati</taxon>
        <taxon>Bacillota</taxon>
        <taxon>Clostridia</taxon>
        <taxon>Eubacteriales</taxon>
        <taxon>Clostridiaceae</taxon>
        <taxon>Clostridium</taxon>
    </lineage>
</organism>
<evidence type="ECO:0000255" key="1">
    <source>
        <dbReference type="HAMAP-Rule" id="MF_01454"/>
    </source>
</evidence>
<evidence type="ECO:0000255" key="2">
    <source>
        <dbReference type="PROSITE-ProRule" id="PRU01229"/>
    </source>
</evidence>
<evidence type="ECO:0000255" key="3">
    <source>
        <dbReference type="PROSITE-ProRule" id="PRU01231"/>
    </source>
</evidence>
<sequence>MFIDKAKIYVKSGDGGNGSVSFRREKYVPLGGPDGGDGGKGGDIVLVSDPDMTTLLDFSYKRKYKADAGEGGSRSRSYGKDAEDLYIKVPMGTVVKEASTGKIMADLSHENDKVVVVKGGRGGRGNARFATATRQAPNFAEPGMPGEEREIILELKLLADVGLVGFPNVGKSTILSTVSNAKPKIANYHFTTLKPNLGVASIKGLEPFVIADIPGIIEGASEGVGLGLDFLRHIERTRVLIHVIDISGIEGRDPYEDFLKINEELKNYSVKLWDRPQIVAANKSDLVAEDKRFEEFKEKIQKLGDYKIFKISAATGEGIKELMAEVSKTLATIPVTQVEIKREDLFIPEEKRFTYEILREDDGTFVVEGSFVDRLLGSVNVNEPDGLRYFYVVLKNKGVIDDLIKKGIKDGDMVRLNDFEFEFVI</sequence>
<keyword id="KW-0963">Cytoplasm</keyword>
<keyword id="KW-0342">GTP-binding</keyword>
<keyword id="KW-0378">Hydrolase</keyword>
<keyword id="KW-0460">Magnesium</keyword>
<keyword id="KW-0479">Metal-binding</keyword>
<keyword id="KW-0547">Nucleotide-binding</keyword>
<keyword id="KW-1185">Reference proteome</keyword>
<gene>
    <name evidence="1" type="primary">obg</name>
    <name type="ordered locus">CTC_02056</name>
</gene>
<feature type="chain" id="PRO_0000385854" description="GTPase Obg">
    <location>
        <begin position="1"/>
        <end position="425"/>
    </location>
</feature>
<feature type="domain" description="Obg" evidence="3">
    <location>
        <begin position="1"/>
        <end position="158"/>
    </location>
</feature>
<feature type="domain" description="OBG-type G" evidence="1">
    <location>
        <begin position="159"/>
        <end position="331"/>
    </location>
</feature>
<feature type="domain" description="OCT" evidence="2">
    <location>
        <begin position="345"/>
        <end position="425"/>
    </location>
</feature>
<feature type="binding site" evidence="1">
    <location>
        <begin position="165"/>
        <end position="172"/>
    </location>
    <ligand>
        <name>GTP</name>
        <dbReference type="ChEBI" id="CHEBI:37565"/>
    </ligand>
</feature>
<feature type="binding site" evidence="1">
    <location>
        <position position="172"/>
    </location>
    <ligand>
        <name>Mg(2+)</name>
        <dbReference type="ChEBI" id="CHEBI:18420"/>
    </ligand>
</feature>
<feature type="binding site" evidence="1">
    <location>
        <begin position="190"/>
        <end position="194"/>
    </location>
    <ligand>
        <name>GTP</name>
        <dbReference type="ChEBI" id="CHEBI:37565"/>
    </ligand>
</feature>
<feature type="binding site" evidence="1">
    <location>
        <position position="192"/>
    </location>
    <ligand>
        <name>Mg(2+)</name>
        <dbReference type="ChEBI" id="CHEBI:18420"/>
    </ligand>
</feature>
<feature type="binding site" evidence="1">
    <location>
        <begin position="212"/>
        <end position="215"/>
    </location>
    <ligand>
        <name>GTP</name>
        <dbReference type="ChEBI" id="CHEBI:37565"/>
    </ligand>
</feature>
<feature type="binding site" evidence="1">
    <location>
        <begin position="282"/>
        <end position="285"/>
    </location>
    <ligand>
        <name>GTP</name>
        <dbReference type="ChEBI" id="CHEBI:37565"/>
    </ligand>
</feature>
<feature type="binding site" evidence="1">
    <location>
        <begin position="312"/>
        <end position="314"/>
    </location>
    <ligand>
        <name>GTP</name>
        <dbReference type="ChEBI" id="CHEBI:37565"/>
    </ligand>
</feature>
<protein>
    <recommendedName>
        <fullName evidence="1">GTPase Obg</fullName>
        <ecNumber evidence="1">3.6.5.-</ecNumber>
    </recommendedName>
    <alternativeName>
        <fullName evidence="1">GTP-binding protein Obg</fullName>
    </alternativeName>
</protein>
<proteinExistence type="inferred from homology"/>
<dbReference type="EC" id="3.6.5.-" evidence="1"/>
<dbReference type="EMBL" id="AE015927">
    <property type="protein sequence ID" value="AAO36557.1"/>
    <property type="molecule type" value="Genomic_DNA"/>
</dbReference>
<dbReference type="RefSeq" id="WP_011100215.1">
    <property type="nucleotide sequence ID" value="NC_004557.1"/>
</dbReference>
<dbReference type="SMR" id="Q892N8"/>
<dbReference type="STRING" id="212717.CTC_02056"/>
<dbReference type="GeneID" id="24255028"/>
<dbReference type="KEGG" id="ctc:CTC_02056"/>
<dbReference type="HOGENOM" id="CLU_011747_2_1_9"/>
<dbReference type="OrthoDB" id="9807318at2"/>
<dbReference type="Proteomes" id="UP000001412">
    <property type="component" value="Chromosome"/>
</dbReference>
<dbReference type="GO" id="GO:0005737">
    <property type="term" value="C:cytoplasm"/>
    <property type="evidence" value="ECO:0007669"/>
    <property type="project" value="UniProtKB-SubCell"/>
</dbReference>
<dbReference type="GO" id="GO:0005525">
    <property type="term" value="F:GTP binding"/>
    <property type="evidence" value="ECO:0007669"/>
    <property type="project" value="UniProtKB-UniRule"/>
</dbReference>
<dbReference type="GO" id="GO:0003924">
    <property type="term" value="F:GTPase activity"/>
    <property type="evidence" value="ECO:0007669"/>
    <property type="project" value="UniProtKB-UniRule"/>
</dbReference>
<dbReference type="GO" id="GO:0000287">
    <property type="term" value="F:magnesium ion binding"/>
    <property type="evidence" value="ECO:0007669"/>
    <property type="project" value="InterPro"/>
</dbReference>
<dbReference type="GO" id="GO:0042254">
    <property type="term" value="P:ribosome biogenesis"/>
    <property type="evidence" value="ECO:0007669"/>
    <property type="project" value="UniProtKB-UniRule"/>
</dbReference>
<dbReference type="CDD" id="cd01898">
    <property type="entry name" value="Obg"/>
    <property type="match status" value="1"/>
</dbReference>
<dbReference type="FunFam" id="2.70.210.12:FF:000001">
    <property type="entry name" value="GTPase Obg"/>
    <property type="match status" value="1"/>
</dbReference>
<dbReference type="Gene3D" id="3.30.300.350">
    <property type="entry name" value="GTP-binding protein OBG, C-terminal domain"/>
    <property type="match status" value="1"/>
</dbReference>
<dbReference type="Gene3D" id="2.70.210.12">
    <property type="entry name" value="GTP1/OBG domain"/>
    <property type="match status" value="1"/>
</dbReference>
<dbReference type="Gene3D" id="3.40.50.300">
    <property type="entry name" value="P-loop containing nucleotide triphosphate hydrolases"/>
    <property type="match status" value="1"/>
</dbReference>
<dbReference type="HAMAP" id="MF_01454">
    <property type="entry name" value="GTPase_Obg"/>
    <property type="match status" value="1"/>
</dbReference>
<dbReference type="InterPro" id="IPR031167">
    <property type="entry name" value="G_OBG"/>
</dbReference>
<dbReference type="InterPro" id="IPR006073">
    <property type="entry name" value="GTP-bd"/>
</dbReference>
<dbReference type="InterPro" id="IPR014100">
    <property type="entry name" value="GTP-bd_Obg/CgtA"/>
</dbReference>
<dbReference type="InterPro" id="IPR036346">
    <property type="entry name" value="GTP-bd_prot_GTP1/OBG_C_sf"/>
</dbReference>
<dbReference type="InterPro" id="IPR006074">
    <property type="entry name" value="GTP1-OBG_CS"/>
</dbReference>
<dbReference type="InterPro" id="IPR006169">
    <property type="entry name" value="GTP1_OBG_dom"/>
</dbReference>
<dbReference type="InterPro" id="IPR036726">
    <property type="entry name" value="GTP1_OBG_dom_sf"/>
</dbReference>
<dbReference type="InterPro" id="IPR045086">
    <property type="entry name" value="OBG_GTPase"/>
</dbReference>
<dbReference type="InterPro" id="IPR015349">
    <property type="entry name" value="OCT_dom"/>
</dbReference>
<dbReference type="InterPro" id="IPR027417">
    <property type="entry name" value="P-loop_NTPase"/>
</dbReference>
<dbReference type="InterPro" id="IPR005225">
    <property type="entry name" value="Small_GTP-bd"/>
</dbReference>
<dbReference type="NCBIfam" id="TIGR02729">
    <property type="entry name" value="Obg_CgtA"/>
    <property type="match status" value="1"/>
</dbReference>
<dbReference type="NCBIfam" id="TIGR03595">
    <property type="entry name" value="Obg_CgtA_exten"/>
    <property type="match status" value="1"/>
</dbReference>
<dbReference type="NCBIfam" id="NF008954">
    <property type="entry name" value="PRK12296.1"/>
    <property type="match status" value="1"/>
</dbReference>
<dbReference type="NCBIfam" id="NF008955">
    <property type="entry name" value="PRK12297.1"/>
    <property type="match status" value="1"/>
</dbReference>
<dbReference type="NCBIfam" id="NF008956">
    <property type="entry name" value="PRK12299.1"/>
    <property type="match status" value="1"/>
</dbReference>
<dbReference type="NCBIfam" id="TIGR00231">
    <property type="entry name" value="small_GTP"/>
    <property type="match status" value="1"/>
</dbReference>
<dbReference type="PANTHER" id="PTHR11702">
    <property type="entry name" value="DEVELOPMENTALLY REGULATED GTP-BINDING PROTEIN-RELATED"/>
    <property type="match status" value="1"/>
</dbReference>
<dbReference type="PANTHER" id="PTHR11702:SF31">
    <property type="entry name" value="MITOCHONDRIAL RIBOSOME-ASSOCIATED GTPASE 2"/>
    <property type="match status" value="1"/>
</dbReference>
<dbReference type="Pfam" id="PF09269">
    <property type="entry name" value="DUF1967"/>
    <property type="match status" value="1"/>
</dbReference>
<dbReference type="Pfam" id="PF01018">
    <property type="entry name" value="GTP1_OBG"/>
    <property type="match status" value="1"/>
</dbReference>
<dbReference type="Pfam" id="PF01926">
    <property type="entry name" value="MMR_HSR1"/>
    <property type="match status" value="1"/>
</dbReference>
<dbReference type="PRINTS" id="PR00326">
    <property type="entry name" value="GTP1OBG"/>
</dbReference>
<dbReference type="SUPFAM" id="SSF102741">
    <property type="entry name" value="Obg GTP-binding protein C-terminal domain"/>
    <property type="match status" value="1"/>
</dbReference>
<dbReference type="SUPFAM" id="SSF82051">
    <property type="entry name" value="Obg GTP-binding protein N-terminal domain"/>
    <property type="match status" value="1"/>
</dbReference>
<dbReference type="SUPFAM" id="SSF52540">
    <property type="entry name" value="P-loop containing nucleoside triphosphate hydrolases"/>
    <property type="match status" value="1"/>
</dbReference>
<dbReference type="PROSITE" id="PS51710">
    <property type="entry name" value="G_OBG"/>
    <property type="match status" value="1"/>
</dbReference>
<dbReference type="PROSITE" id="PS00905">
    <property type="entry name" value="GTP1_OBG"/>
    <property type="match status" value="1"/>
</dbReference>
<dbReference type="PROSITE" id="PS51883">
    <property type="entry name" value="OBG"/>
    <property type="match status" value="1"/>
</dbReference>
<dbReference type="PROSITE" id="PS51881">
    <property type="entry name" value="OCT"/>
    <property type="match status" value="1"/>
</dbReference>